<keyword id="KW-0472">Membrane</keyword>
<keyword id="KW-0520">NAD</keyword>
<keyword id="KW-0521">NADP</keyword>
<keyword id="KW-0618">Plastoquinone</keyword>
<keyword id="KW-0874">Quinone</keyword>
<keyword id="KW-0793">Thylakoid</keyword>
<keyword id="KW-1278">Translocase</keyword>
<keyword id="KW-0813">Transport</keyword>
<reference key="1">
    <citation type="journal article" date="2007" name="PLoS Genet.">
        <title>Patterns and implications of gene gain and loss in the evolution of Prochlorococcus.</title>
        <authorList>
            <person name="Kettler G.C."/>
            <person name="Martiny A.C."/>
            <person name="Huang K."/>
            <person name="Zucker J."/>
            <person name="Coleman M.L."/>
            <person name="Rodrigue S."/>
            <person name="Chen F."/>
            <person name="Lapidus A."/>
            <person name="Ferriera S."/>
            <person name="Johnson J."/>
            <person name="Steglich C."/>
            <person name="Church G.M."/>
            <person name="Richardson P."/>
            <person name="Chisholm S.W."/>
        </authorList>
    </citation>
    <scope>NUCLEOTIDE SEQUENCE [LARGE SCALE GENOMIC DNA]</scope>
    <source>
        <strain>MIT 9215</strain>
    </source>
</reference>
<comment type="function">
    <text evidence="1">NDH-1 shuttles electrons from an unknown electron donor, via FMN and iron-sulfur (Fe-S) centers, to quinones in the respiratory and/or the photosynthetic chain. The immediate electron acceptor for the enzyme in this species is believed to be plastoquinone. Couples the redox reaction to proton translocation, and thus conserves the redox energy in a proton gradient. Cyanobacterial NDH-1 also plays a role in inorganic carbon-concentration.</text>
</comment>
<comment type="catalytic activity">
    <reaction evidence="1">
        <text>a plastoquinone + NADH + (n+1) H(+)(in) = a plastoquinol + NAD(+) + n H(+)(out)</text>
        <dbReference type="Rhea" id="RHEA:42608"/>
        <dbReference type="Rhea" id="RHEA-COMP:9561"/>
        <dbReference type="Rhea" id="RHEA-COMP:9562"/>
        <dbReference type="ChEBI" id="CHEBI:15378"/>
        <dbReference type="ChEBI" id="CHEBI:17757"/>
        <dbReference type="ChEBI" id="CHEBI:57540"/>
        <dbReference type="ChEBI" id="CHEBI:57945"/>
        <dbReference type="ChEBI" id="CHEBI:62192"/>
    </reaction>
</comment>
<comment type="catalytic activity">
    <reaction evidence="1">
        <text>a plastoquinone + NADPH + (n+1) H(+)(in) = a plastoquinol + NADP(+) + n H(+)(out)</text>
        <dbReference type="Rhea" id="RHEA:42612"/>
        <dbReference type="Rhea" id="RHEA-COMP:9561"/>
        <dbReference type="Rhea" id="RHEA-COMP:9562"/>
        <dbReference type="ChEBI" id="CHEBI:15378"/>
        <dbReference type="ChEBI" id="CHEBI:17757"/>
        <dbReference type="ChEBI" id="CHEBI:57783"/>
        <dbReference type="ChEBI" id="CHEBI:58349"/>
        <dbReference type="ChEBI" id="CHEBI:62192"/>
    </reaction>
</comment>
<comment type="subunit">
    <text evidence="1">NDH-1 can be composed of about 15 different subunits; different subcomplexes with different compositions have been identified which probably have different functions.</text>
</comment>
<comment type="subcellular location">
    <subcellularLocation>
        <location evidence="1">Cellular thylakoid membrane</location>
        <topology evidence="1">Peripheral membrane protein</topology>
        <orientation evidence="1">Cytoplasmic side</orientation>
    </subcellularLocation>
</comment>
<comment type="similarity">
    <text evidence="1">Belongs to the complex I NdhO subunit family.</text>
</comment>
<dbReference type="EC" id="7.1.1.-" evidence="1"/>
<dbReference type="EMBL" id="CP000825">
    <property type="protein sequence ID" value="ABV49758.1"/>
    <property type="molecule type" value="Genomic_DNA"/>
</dbReference>
<dbReference type="RefSeq" id="WP_012006937.1">
    <property type="nucleotide sequence ID" value="NC_009840.1"/>
</dbReference>
<dbReference type="SMR" id="A8G2C7"/>
<dbReference type="STRING" id="93060.P9215_01391"/>
<dbReference type="KEGG" id="pmh:P9215_01391"/>
<dbReference type="eggNOG" id="ENOG5031XXZ">
    <property type="taxonomic scope" value="Bacteria"/>
</dbReference>
<dbReference type="HOGENOM" id="CLU_195299_0_0_3"/>
<dbReference type="OrthoDB" id="426633at2"/>
<dbReference type="Proteomes" id="UP000002014">
    <property type="component" value="Chromosome"/>
</dbReference>
<dbReference type="GO" id="GO:0031676">
    <property type="term" value="C:plasma membrane-derived thylakoid membrane"/>
    <property type="evidence" value="ECO:0007669"/>
    <property type="project" value="UniProtKB-SubCell"/>
</dbReference>
<dbReference type="GO" id="GO:0016655">
    <property type="term" value="F:oxidoreductase activity, acting on NAD(P)H, quinone or similar compound as acceptor"/>
    <property type="evidence" value="ECO:0007669"/>
    <property type="project" value="UniProtKB-UniRule"/>
</dbReference>
<dbReference type="GO" id="GO:0048038">
    <property type="term" value="F:quinone binding"/>
    <property type="evidence" value="ECO:0007669"/>
    <property type="project" value="UniProtKB-KW"/>
</dbReference>
<dbReference type="HAMAP" id="MF_01354">
    <property type="entry name" value="NDH1_NDH1O"/>
    <property type="match status" value="1"/>
</dbReference>
<dbReference type="InterPro" id="IPR020905">
    <property type="entry name" value="NdhO"/>
</dbReference>
<dbReference type="Pfam" id="PF11910">
    <property type="entry name" value="NdhO"/>
    <property type="match status" value="1"/>
</dbReference>
<gene>
    <name evidence="1" type="primary">ndhO</name>
    <name type="ordered locus">P9215_01391</name>
</gene>
<evidence type="ECO:0000255" key="1">
    <source>
        <dbReference type="HAMAP-Rule" id="MF_01354"/>
    </source>
</evidence>
<accession>A8G2C7</accession>
<protein>
    <recommendedName>
        <fullName evidence="1">NAD(P)H-quinone oxidoreductase subunit O</fullName>
        <ecNumber evidence="1">7.1.1.-</ecNumber>
    </recommendedName>
    <alternativeName>
        <fullName evidence="1">NAD(P)H dehydrogenase I subunit O</fullName>
    </alternativeName>
    <alternativeName>
        <fullName>NDH-1 subunit O</fullName>
    </alternativeName>
    <alternativeName>
        <fullName>NDH-O</fullName>
    </alternativeName>
</protein>
<proteinExistence type="inferred from homology"/>
<organism>
    <name type="scientific">Prochlorococcus marinus (strain MIT 9215)</name>
    <dbReference type="NCBI Taxonomy" id="93060"/>
    <lineage>
        <taxon>Bacteria</taxon>
        <taxon>Bacillati</taxon>
        <taxon>Cyanobacteriota</taxon>
        <taxon>Cyanophyceae</taxon>
        <taxon>Synechococcales</taxon>
        <taxon>Prochlorococcaceae</taxon>
        <taxon>Prochlorococcus</taxon>
    </lineage>
</organism>
<feature type="chain" id="PRO_0000353641" description="NAD(P)H-quinone oxidoreductase subunit O">
    <location>
        <begin position="1"/>
        <end position="78"/>
    </location>
</feature>
<sequence length="78" mass="9117">MTDSIPKKPFKKGSLVFVDRENYIKSIEALASDDDLPNYVFEGPGEILSVKDEYAQVRWRRPVPDVWLKLDQLKEYTQ</sequence>
<name>NDHO_PROM2</name>